<accession>B2TZV8</accession>
<reference key="1">
    <citation type="submission" date="2008-05" db="EMBL/GenBank/DDBJ databases">
        <title>Complete sequence of Shigella boydii serotype 18 strain BS512.</title>
        <authorList>
            <person name="Rasko D.A."/>
            <person name="Rosovitz M."/>
            <person name="Maurelli A.T."/>
            <person name="Myers G."/>
            <person name="Seshadri R."/>
            <person name="Cer R."/>
            <person name="Jiang L."/>
            <person name="Ravel J."/>
            <person name="Sebastian Y."/>
        </authorList>
    </citation>
    <scope>NUCLEOTIDE SEQUENCE [LARGE SCALE GENOMIC DNA]</scope>
    <source>
        <strain>CDC 3083-94 / BS512</strain>
    </source>
</reference>
<dbReference type="EC" id="1.2.1.70" evidence="1"/>
<dbReference type="EMBL" id="CP001063">
    <property type="protein sequence ID" value="ACD09853.1"/>
    <property type="molecule type" value="Genomic_DNA"/>
</dbReference>
<dbReference type="RefSeq" id="WP_000173200.1">
    <property type="nucleotide sequence ID" value="NC_010658.1"/>
</dbReference>
<dbReference type="SMR" id="B2TZV8"/>
<dbReference type="STRING" id="344609.SbBS512_E1374"/>
<dbReference type="GeneID" id="93775275"/>
<dbReference type="KEGG" id="sbc:SbBS512_E1374"/>
<dbReference type="HOGENOM" id="CLU_035113_2_2_6"/>
<dbReference type="UniPathway" id="UPA00251">
    <property type="reaction ID" value="UER00316"/>
</dbReference>
<dbReference type="Proteomes" id="UP000001030">
    <property type="component" value="Chromosome"/>
</dbReference>
<dbReference type="GO" id="GO:0008883">
    <property type="term" value="F:glutamyl-tRNA reductase activity"/>
    <property type="evidence" value="ECO:0007669"/>
    <property type="project" value="UniProtKB-UniRule"/>
</dbReference>
<dbReference type="GO" id="GO:0050661">
    <property type="term" value="F:NADP binding"/>
    <property type="evidence" value="ECO:0007669"/>
    <property type="project" value="InterPro"/>
</dbReference>
<dbReference type="GO" id="GO:0019353">
    <property type="term" value="P:protoporphyrinogen IX biosynthetic process from glutamate"/>
    <property type="evidence" value="ECO:0007669"/>
    <property type="project" value="TreeGrafter"/>
</dbReference>
<dbReference type="CDD" id="cd05213">
    <property type="entry name" value="NAD_bind_Glutamyl_tRNA_reduct"/>
    <property type="match status" value="1"/>
</dbReference>
<dbReference type="FunFam" id="3.30.460.30:FF:000001">
    <property type="entry name" value="Glutamyl-tRNA reductase"/>
    <property type="match status" value="1"/>
</dbReference>
<dbReference type="FunFam" id="3.40.50.720:FF:000031">
    <property type="entry name" value="Glutamyl-tRNA reductase"/>
    <property type="match status" value="1"/>
</dbReference>
<dbReference type="Gene3D" id="3.30.460.30">
    <property type="entry name" value="Glutamyl-tRNA reductase, N-terminal domain"/>
    <property type="match status" value="1"/>
</dbReference>
<dbReference type="Gene3D" id="3.40.50.720">
    <property type="entry name" value="NAD(P)-binding Rossmann-like Domain"/>
    <property type="match status" value="1"/>
</dbReference>
<dbReference type="HAMAP" id="MF_00087">
    <property type="entry name" value="Glu_tRNA_reductase"/>
    <property type="match status" value="1"/>
</dbReference>
<dbReference type="InterPro" id="IPR000343">
    <property type="entry name" value="4pyrrol_synth_GluRdtase"/>
</dbReference>
<dbReference type="InterPro" id="IPR015896">
    <property type="entry name" value="4pyrrol_synth_GluRdtase_dimer"/>
</dbReference>
<dbReference type="InterPro" id="IPR015895">
    <property type="entry name" value="4pyrrol_synth_GluRdtase_N"/>
</dbReference>
<dbReference type="InterPro" id="IPR018214">
    <property type="entry name" value="GluRdtase_CS"/>
</dbReference>
<dbReference type="InterPro" id="IPR036453">
    <property type="entry name" value="GluRdtase_dimer_dom_sf"/>
</dbReference>
<dbReference type="InterPro" id="IPR036343">
    <property type="entry name" value="GluRdtase_N_sf"/>
</dbReference>
<dbReference type="InterPro" id="IPR036291">
    <property type="entry name" value="NAD(P)-bd_dom_sf"/>
</dbReference>
<dbReference type="InterPro" id="IPR006151">
    <property type="entry name" value="Shikm_DH/Glu-tRNA_Rdtase"/>
</dbReference>
<dbReference type="NCBIfam" id="TIGR01035">
    <property type="entry name" value="hemA"/>
    <property type="match status" value="1"/>
</dbReference>
<dbReference type="PANTHER" id="PTHR43013">
    <property type="entry name" value="GLUTAMYL-TRNA REDUCTASE"/>
    <property type="match status" value="1"/>
</dbReference>
<dbReference type="PANTHER" id="PTHR43013:SF1">
    <property type="entry name" value="GLUTAMYL-TRNA REDUCTASE"/>
    <property type="match status" value="1"/>
</dbReference>
<dbReference type="Pfam" id="PF00745">
    <property type="entry name" value="GlutR_dimer"/>
    <property type="match status" value="1"/>
</dbReference>
<dbReference type="Pfam" id="PF05201">
    <property type="entry name" value="GlutR_N"/>
    <property type="match status" value="1"/>
</dbReference>
<dbReference type="Pfam" id="PF01488">
    <property type="entry name" value="Shikimate_DH"/>
    <property type="match status" value="1"/>
</dbReference>
<dbReference type="PIRSF" id="PIRSF000445">
    <property type="entry name" value="4pyrrol_synth_GluRdtase"/>
    <property type="match status" value="1"/>
</dbReference>
<dbReference type="SUPFAM" id="SSF69742">
    <property type="entry name" value="Glutamyl tRNA-reductase catalytic, N-terminal domain"/>
    <property type="match status" value="1"/>
</dbReference>
<dbReference type="SUPFAM" id="SSF69075">
    <property type="entry name" value="Glutamyl tRNA-reductase dimerization domain"/>
    <property type="match status" value="1"/>
</dbReference>
<dbReference type="SUPFAM" id="SSF51735">
    <property type="entry name" value="NAD(P)-binding Rossmann-fold domains"/>
    <property type="match status" value="1"/>
</dbReference>
<dbReference type="PROSITE" id="PS00747">
    <property type="entry name" value="GLUTR"/>
    <property type="match status" value="1"/>
</dbReference>
<keyword id="KW-0521">NADP</keyword>
<keyword id="KW-0560">Oxidoreductase</keyword>
<keyword id="KW-0627">Porphyrin biosynthesis</keyword>
<keyword id="KW-1185">Reference proteome</keyword>
<protein>
    <recommendedName>
        <fullName evidence="1">Glutamyl-tRNA reductase</fullName>
        <shortName evidence="1">GluTR</shortName>
        <ecNumber evidence="1">1.2.1.70</ecNumber>
    </recommendedName>
</protein>
<sequence>MTLLALGINHKTAPVSLRERVSFSPDKLDQALDSLLAQPMVQGGVVLSTCNRTELYLSVEEQDNLQEALIRWLCDYHNLNEEDLRKSLYWHQDNDAVSHLMRVASGLDSLVLGEPQILGQVKKAFADSQKGHMKASELERMFQKSFSVAKRVRTETDIGASAVSVAFAACTLARQIFESLSTVTVLLVGAGETIELVARHLREHKVQKMIIANRTRERAQILADEVGAEVIALSEIDERLREADIIISSTASPLPIIGKGMVERALKSRRNQPMLLVDIAVPRDVEPEVGKLANAYLYSVDDLQSIISHNLAQRKAAAVEAETIVAQETSEFMAWLRAQSASETIREYRSQAEHVRDELTAKALAALEQGGDAQAIMQDLAWKLTNRLIHAPTKSLQQAARDGDNERLNILRDSLGLE</sequence>
<organism>
    <name type="scientific">Shigella boydii serotype 18 (strain CDC 3083-94 / BS512)</name>
    <dbReference type="NCBI Taxonomy" id="344609"/>
    <lineage>
        <taxon>Bacteria</taxon>
        <taxon>Pseudomonadati</taxon>
        <taxon>Pseudomonadota</taxon>
        <taxon>Gammaproteobacteria</taxon>
        <taxon>Enterobacterales</taxon>
        <taxon>Enterobacteriaceae</taxon>
        <taxon>Shigella</taxon>
    </lineage>
</organism>
<evidence type="ECO:0000255" key="1">
    <source>
        <dbReference type="HAMAP-Rule" id="MF_00087"/>
    </source>
</evidence>
<name>HEM1_SHIB3</name>
<feature type="chain" id="PRO_1000093170" description="Glutamyl-tRNA reductase">
    <location>
        <begin position="1"/>
        <end position="418"/>
    </location>
</feature>
<feature type="active site" description="Nucleophile" evidence="1">
    <location>
        <position position="50"/>
    </location>
</feature>
<feature type="binding site" evidence="1">
    <location>
        <begin position="49"/>
        <end position="52"/>
    </location>
    <ligand>
        <name>substrate</name>
    </ligand>
</feature>
<feature type="binding site" evidence="1">
    <location>
        <position position="109"/>
    </location>
    <ligand>
        <name>substrate</name>
    </ligand>
</feature>
<feature type="binding site" evidence="1">
    <location>
        <begin position="114"/>
        <end position="116"/>
    </location>
    <ligand>
        <name>substrate</name>
    </ligand>
</feature>
<feature type="binding site" evidence="1">
    <location>
        <position position="120"/>
    </location>
    <ligand>
        <name>substrate</name>
    </ligand>
</feature>
<feature type="binding site" evidence="1">
    <location>
        <begin position="189"/>
        <end position="194"/>
    </location>
    <ligand>
        <name>NADP(+)</name>
        <dbReference type="ChEBI" id="CHEBI:58349"/>
    </ligand>
</feature>
<feature type="site" description="Important for activity" evidence="1">
    <location>
        <position position="99"/>
    </location>
</feature>
<comment type="function">
    <text evidence="1">Catalyzes the NADPH-dependent reduction of glutamyl-tRNA(Glu) to glutamate 1-semialdehyde (GSA).</text>
</comment>
<comment type="catalytic activity">
    <reaction evidence="1">
        <text>(S)-4-amino-5-oxopentanoate + tRNA(Glu) + NADP(+) = L-glutamyl-tRNA(Glu) + NADPH + H(+)</text>
        <dbReference type="Rhea" id="RHEA:12344"/>
        <dbReference type="Rhea" id="RHEA-COMP:9663"/>
        <dbReference type="Rhea" id="RHEA-COMP:9680"/>
        <dbReference type="ChEBI" id="CHEBI:15378"/>
        <dbReference type="ChEBI" id="CHEBI:57501"/>
        <dbReference type="ChEBI" id="CHEBI:57783"/>
        <dbReference type="ChEBI" id="CHEBI:58349"/>
        <dbReference type="ChEBI" id="CHEBI:78442"/>
        <dbReference type="ChEBI" id="CHEBI:78520"/>
        <dbReference type="EC" id="1.2.1.70"/>
    </reaction>
</comment>
<comment type="pathway">
    <text evidence="1">Porphyrin-containing compound metabolism; protoporphyrin-IX biosynthesis; 5-aminolevulinate from L-glutamyl-tRNA(Glu): step 1/2.</text>
</comment>
<comment type="subunit">
    <text evidence="1">Homodimer.</text>
</comment>
<comment type="domain">
    <text evidence="1">Possesses an unusual extended V-shaped dimeric structure with each monomer consisting of three distinct domains arranged along a curved 'spinal' alpha-helix. The N-terminal catalytic domain specifically recognizes the glutamate moiety of the substrate. The second domain is the NADPH-binding domain, and the third C-terminal domain is responsible for dimerization.</text>
</comment>
<comment type="miscellaneous">
    <text evidence="1">During catalysis, the active site Cys acts as a nucleophile attacking the alpha-carbonyl group of tRNA-bound glutamate with the formation of a thioester intermediate between enzyme and glutamate, and the concomitant release of tRNA(Glu). The thioester intermediate is finally reduced by direct hydride transfer from NADPH, to form the product GSA.</text>
</comment>
<comment type="similarity">
    <text evidence="1">Belongs to the glutamyl-tRNA reductase family.</text>
</comment>
<gene>
    <name evidence="1" type="primary">hemA</name>
    <name type="ordered locus">SbBS512_E1374</name>
</gene>
<proteinExistence type="inferred from homology"/>